<comment type="function">
    <text>Lea proteins are late embryonic proteins abundant in higher plant seed embryos.</text>
</comment>
<comment type="induction">
    <text>By abscisic acid (ABA) and osmotic stress.</text>
</comment>
<comment type="similarity">
    <text evidence="2">Belongs to the small hydrophilic plant seed protein family.</text>
</comment>
<name>LE194_HORVU</name>
<keyword id="KW-0677">Repeat</keyword>
<keyword id="KW-0346">Stress response</keyword>
<feature type="chain" id="PRO_0000185684" description="Late embryogenesis abundant protein B19.4">
    <location>
        <begin position="1"/>
        <end position="153"/>
    </location>
</feature>
<feature type="repeat" description="1">
    <location>
        <begin position="43"/>
        <end position="62"/>
    </location>
</feature>
<feature type="repeat" description="2">
    <location>
        <begin position="63"/>
        <end position="82"/>
    </location>
</feature>
<feature type="repeat" description="3">
    <location>
        <begin position="83"/>
        <end position="102"/>
    </location>
</feature>
<feature type="repeat" description="4">
    <location>
        <begin position="103"/>
        <end position="122"/>
    </location>
</feature>
<feature type="region of interest" description="Disordered" evidence="1">
    <location>
        <begin position="1"/>
        <end position="153"/>
    </location>
</feature>
<feature type="region of interest" description="4 X 20 AA tandem repeats">
    <location>
        <begin position="43"/>
        <end position="122"/>
    </location>
</feature>
<feature type="compositionally biased region" description="Basic and acidic residues" evidence="1">
    <location>
        <begin position="7"/>
        <end position="19"/>
    </location>
</feature>
<feature type="compositionally biased region" description="Basic and acidic residues" evidence="1">
    <location>
        <begin position="32"/>
        <end position="122"/>
    </location>
</feature>
<feature type="compositionally biased region" description="Basic and acidic residues" evidence="1">
    <location>
        <begin position="133"/>
        <end position="153"/>
    </location>
</feature>
<sequence length="153" mass="16896">MASGQQERSELDRMAREGETVVPGGTGGKTLEAQEHLAEGRSRGGQTRKEQLGEEGYREMGHKGGETRKEQLGEEGYREMGHKGGETRKEQLGEEGYREMGHKGGETRKEQMGEEGYREMGRKGGLSTMNESGGERAAREGIDIDESKFKTKS</sequence>
<reference key="1">
    <citation type="journal article" date="1992" name="Plant J.">
        <title>Late embryogenesis-abundant genes encoding proteins with different numbers of hydrophilic repeats are regulated differentially by abscisic acid and osmotic stress.</title>
        <authorList>
            <person name="Espelund M."/>
            <person name="Saeboe-Larssen S."/>
            <person name="Hughes D.W."/>
            <person name="Galau G.A."/>
            <person name="Larsen F."/>
            <person name="Jakobsen K.S."/>
        </authorList>
    </citation>
    <scope>NUCLEOTIDE SEQUENCE [MRNA]</scope>
    <source>
        <strain>cv. Bomi</strain>
        <tissue>Embryo</tissue>
    </source>
</reference>
<organism>
    <name type="scientific">Hordeum vulgare</name>
    <name type="common">Barley</name>
    <dbReference type="NCBI Taxonomy" id="4513"/>
    <lineage>
        <taxon>Eukaryota</taxon>
        <taxon>Viridiplantae</taxon>
        <taxon>Streptophyta</taxon>
        <taxon>Embryophyta</taxon>
        <taxon>Tracheophyta</taxon>
        <taxon>Spermatophyta</taxon>
        <taxon>Magnoliopsida</taxon>
        <taxon>Liliopsida</taxon>
        <taxon>Poales</taxon>
        <taxon>Poaceae</taxon>
        <taxon>BOP clade</taxon>
        <taxon>Pooideae</taxon>
        <taxon>Triticodae</taxon>
        <taxon>Triticeae</taxon>
        <taxon>Hordeinae</taxon>
        <taxon>Hordeum</taxon>
    </lineage>
</organism>
<protein>
    <recommendedName>
        <fullName>Late embryogenesis abundant protein B19.4</fullName>
    </recommendedName>
</protein>
<accession>Q05191</accession>
<gene>
    <name type="primary">B19.4</name>
</gene>
<evidence type="ECO:0000256" key="1">
    <source>
        <dbReference type="SAM" id="MobiDB-lite"/>
    </source>
</evidence>
<evidence type="ECO:0000305" key="2"/>
<dbReference type="EMBL" id="X62806">
    <property type="protein sequence ID" value="CAA44624.1"/>
    <property type="molecule type" value="mRNA"/>
</dbReference>
<dbReference type="PIR" id="S36752">
    <property type="entry name" value="S36752"/>
</dbReference>
<dbReference type="ExpressionAtlas" id="Q05191">
    <property type="expression patterns" value="baseline and differential"/>
</dbReference>
<dbReference type="GO" id="GO:0005829">
    <property type="term" value="C:cytosol"/>
    <property type="evidence" value="ECO:0007669"/>
    <property type="project" value="TreeGrafter"/>
</dbReference>
<dbReference type="GO" id="GO:0009737">
    <property type="term" value="P:response to abscisic acid"/>
    <property type="evidence" value="ECO:0007669"/>
    <property type="project" value="TreeGrafter"/>
</dbReference>
<dbReference type="InterPro" id="IPR038956">
    <property type="entry name" value="LEA_5"/>
</dbReference>
<dbReference type="InterPro" id="IPR022377">
    <property type="entry name" value="Sm_Hydphi_plant_seed_CS"/>
</dbReference>
<dbReference type="InterPro" id="IPR000389">
    <property type="entry name" value="Small_hydrophilic_seed_prot"/>
</dbReference>
<dbReference type="PANTHER" id="PTHR34671">
    <property type="entry name" value="EM-LIKE PROTEIN GEA1"/>
    <property type="match status" value="1"/>
</dbReference>
<dbReference type="PANTHER" id="PTHR34671:SF19">
    <property type="entry name" value="EMBRYONIC ABUNDANT PROTEIN 1"/>
    <property type="match status" value="1"/>
</dbReference>
<dbReference type="Pfam" id="PF00477">
    <property type="entry name" value="LEA_5"/>
    <property type="match status" value="1"/>
</dbReference>
<dbReference type="PROSITE" id="PS00431">
    <property type="entry name" value="SMALL_HYDR_PLANT_SEED"/>
    <property type="match status" value="1"/>
</dbReference>
<proteinExistence type="evidence at transcript level"/>